<accession>P0A543</accession>
<accession>A0A1R3Y4Z2</accession>
<accession>P47730</accession>
<accession>P97049</accession>
<accession>X2BNY3</accession>
<keyword id="KW-0028">Amino-acid biosynthesis</keyword>
<keyword id="KW-0220">Diaminopimelate biosynthesis</keyword>
<keyword id="KW-0457">Lysine biosynthesis</keyword>
<keyword id="KW-0486">Methionine biosynthesis</keyword>
<keyword id="KW-0521">NADP</keyword>
<keyword id="KW-0560">Oxidoreductase</keyword>
<keyword id="KW-1185">Reference proteome</keyword>
<keyword id="KW-0791">Threonine biosynthesis</keyword>
<dbReference type="EC" id="1.2.1.11" evidence="1"/>
<dbReference type="EMBL" id="Z18290">
    <property type="status" value="NOT_ANNOTATED_CDS"/>
    <property type="molecule type" value="Genomic_DNA"/>
</dbReference>
<dbReference type="EMBL" id="LT708304">
    <property type="protein sequence ID" value="SIU02364.1"/>
    <property type="molecule type" value="Genomic_DNA"/>
</dbReference>
<dbReference type="RefSeq" id="NP_857373.1">
    <property type="nucleotide sequence ID" value="NC_002945.3"/>
</dbReference>
<dbReference type="RefSeq" id="WP_003419825.1">
    <property type="nucleotide sequence ID" value="NC_002945.4"/>
</dbReference>
<dbReference type="SMR" id="P0A543"/>
<dbReference type="KEGG" id="mbo:BQ2027_MB3735C"/>
<dbReference type="PATRIC" id="fig|233413.5.peg.4088"/>
<dbReference type="UniPathway" id="UPA00034">
    <property type="reaction ID" value="UER00016"/>
</dbReference>
<dbReference type="UniPathway" id="UPA00050">
    <property type="reaction ID" value="UER00463"/>
</dbReference>
<dbReference type="UniPathway" id="UPA00051">
    <property type="reaction ID" value="UER00464"/>
</dbReference>
<dbReference type="Proteomes" id="UP000001419">
    <property type="component" value="Chromosome"/>
</dbReference>
<dbReference type="GO" id="GO:0004073">
    <property type="term" value="F:aspartate-semialdehyde dehydrogenase activity"/>
    <property type="evidence" value="ECO:0007669"/>
    <property type="project" value="UniProtKB-UniRule"/>
</dbReference>
<dbReference type="GO" id="GO:0051287">
    <property type="term" value="F:NAD binding"/>
    <property type="evidence" value="ECO:0007669"/>
    <property type="project" value="InterPro"/>
</dbReference>
<dbReference type="GO" id="GO:0050661">
    <property type="term" value="F:NADP binding"/>
    <property type="evidence" value="ECO:0007669"/>
    <property type="project" value="UniProtKB-UniRule"/>
</dbReference>
<dbReference type="GO" id="GO:0046983">
    <property type="term" value="F:protein dimerization activity"/>
    <property type="evidence" value="ECO:0007669"/>
    <property type="project" value="InterPro"/>
</dbReference>
<dbReference type="GO" id="GO:0071266">
    <property type="term" value="P:'de novo' L-methionine biosynthetic process"/>
    <property type="evidence" value="ECO:0007669"/>
    <property type="project" value="UniProtKB-UniRule"/>
</dbReference>
<dbReference type="GO" id="GO:0019877">
    <property type="term" value="P:diaminopimelate biosynthetic process"/>
    <property type="evidence" value="ECO:0007669"/>
    <property type="project" value="UniProtKB-UniRule"/>
</dbReference>
<dbReference type="GO" id="GO:0009097">
    <property type="term" value="P:isoleucine biosynthetic process"/>
    <property type="evidence" value="ECO:0007669"/>
    <property type="project" value="InterPro"/>
</dbReference>
<dbReference type="GO" id="GO:0009089">
    <property type="term" value="P:lysine biosynthetic process via diaminopimelate"/>
    <property type="evidence" value="ECO:0007669"/>
    <property type="project" value="UniProtKB-UniRule"/>
</dbReference>
<dbReference type="GO" id="GO:0009088">
    <property type="term" value="P:threonine biosynthetic process"/>
    <property type="evidence" value="ECO:0007669"/>
    <property type="project" value="UniProtKB-UniRule"/>
</dbReference>
<dbReference type="CDD" id="cd18131">
    <property type="entry name" value="ASADH_C_bac_euk_like"/>
    <property type="match status" value="1"/>
</dbReference>
<dbReference type="CDD" id="cd02316">
    <property type="entry name" value="VcASADH2_like_N"/>
    <property type="match status" value="1"/>
</dbReference>
<dbReference type="FunFam" id="3.30.360.10:FF:000034">
    <property type="entry name" value="Aspartate-semialdehyde dehydrogenase"/>
    <property type="match status" value="1"/>
</dbReference>
<dbReference type="Gene3D" id="3.30.360.10">
    <property type="entry name" value="Dihydrodipicolinate Reductase, domain 2"/>
    <property type="match status" value="1"/>
</dbReference>
<dbReference type="Gene3D" id="3.40.50.720">
    <property type="entry name" value="NAD(P)-binding Rossmann-like Domain"/>
    <property type="match status" value="1"/>
</dbReference>
<dbReference type="HAMAP" id="MF_02121">
    <property type="entry name" value="ASADH"/>
    <property type="match status" value="1"/>
</dbReference>
<dbReference type="InterPro" id="IPR000319">
    <property type="entry name" value="Asp-semialdehyde_DH_CS"/>
</dbReference>
<dbReference type="InterPro" id="IPR012080">
    <property type="entry name" value="Asp_semialdehyde_DH"/>
</dbReference>
<dbReference type="InterPro" id="IPR005986">
    <property type="entry name" value="Asp_semialdehyde_DH_beta"/>
</dbReference>
<dbReference type="InterPro" id="IPR036291">
    <property type="entry name" value="NAD(P)-bd_dom_sf"/>
</dbReference>
<dbReference type="InterPro" id="IPR000534">
    <property type="entry name" value="Semialdehyde_DH_NAD-bd"/>
</dbReference>
<dbReference type="InterPro" id="IPR012280">
    <property type="entry name" value="Semialdhyde_DH_dimer_dom"/>
</dbReference>
<dbReference type="NCBIfam" id="TIGR01296">
    <property type="entry name" value="asd_B"/>
    <property type="match status" value="1"/>
</dbReference>
<dbReference type="NCBIfam" id="NF011456">
    <property type="entry name" value="PRK14874.1"/>
    <property type="match status" value="1"/>
</dbReference>
<dbReference type="PANTHER" id="PTHR46278:SF2">
    <property type="entry name" value="ASPARTATE-SEMIALDEHYDE DEHYDROGENASE"/>
    <property type="match status" value="1"/>
</dbReference>
<dbReference type="PANTHER" id="PTHR46278">
    <property type="entry name" value="DEHYDROGENASE, PUTATIVE-RELATED"/>
    <property type="match status" value="1"/>
</dbReference>
<dbReference type="Pfam" id="PF01118">
    <property type="entry name" value="Semialdhyde_dh"/>
    <property type="match status" value="1"/>
</dbReference>
<dbReference type="Pfam" id="PF02774">
    <property type="entry name" value="Semialdhyde_dhC"/>
    <property type="match status" value="1"/>
</dbReference>
<dbReference type="PIRSF" id="PIRSF000148">
    <property type="entry name" value="ASA_dh"/>
    <property type="match status" value="1"/>
</dbReference>
<dbReference type="SMART" id="SM00859">
    <property type="entry name" value="Semialdhyde_dh"/>
    <property type="match status" value="1"/>
</dbReference>
<dbReference type="SUPFAM" id="SSF55347">
    <property type="entry name" value="Glyceraldehyde-3-phosphate dehydrogenase-like, C-terminal domain"/>
    <property type="match status" value="1"/>
</dbReference>
<dbReference type="SUPFAM" id="SSF51735">
    <property type="entry name" value="NAD(P)-binding Rossmann-fold domains"/>
    <property type="match status" value="1"/>
</dbReference>
<dbReference type="PROSITE" id="PS01103">
    <property type="entry name" value="ASD"/>
    <property type="match status" value="1"/>
</dbReference>
<name>DHAS_MYCBO</name>
<proteinExistence type="inferred from homology"/>
<protein>
    <recommendedName>
        <fullName evidence="1">Aspartate-semialdehyde dehydrogenase</fullName>
        <shortName evidence="1">ASA dehydrogenase</shortName>
        <shortName evidence="1">ASADH</shortName>
        <ecNumber evidence="1">1.2.1.11</ecNumber>
    </recommendedName>
    <alternativeName>
        <fullName evidence="1">Aspartate-beta-semialdehyde dehydrogenase</fullName>
    </alternativeName>
</protein>
<reference key="1">
    <citation type="journal article" date="1994" name="Mol. Microbiol.">
        <title>Isolation and characterization of the aspartokinase and aspartate semialdehyde dehydrogenase operon from mycobacteria.</title>
        <authorList>
            <person name="Cirillo J.D."/>
            <person name="Weisbrod T.R."/>
            <person name="Pascopella L."/>
            <person name="Bloom B.R."/>
            <person name="Jacobs W.R. Jr."/>
        </authorList>
    </citation>
    <scope>NUCLEOTIDE SEQUENCE [GENOMIC DNA]</scope>
    <source>
        <strain>BCG / Pasteur</strain>
    </source>
</reference>
<reference key="2">
    <citation type="journal article" date="2003" name="Proc. Natl. Acad. Sci. U.S.A.">
        <title>The complete genome sequence of Mycobacterium bovis.</title>
        <authorList>
            <person name="Garnier T."/>
            <person name="Eiglmeier K."/>
            <person name="Camus J.-C."/>
            <person name="Medina N."/>
            <person name="Mansoor H."/>
            <person name="Pryor M."/>
            <person name="Duthoy S."/>
            <person name="Grondin S."/>
            <person name="Lacroix C."/>
            <person name="Monsempe C."/>
            <person name="Simon S."/>
            <person name="Harris B."/>
            <person name="Atkin R."/>
            <person name="Doggett J."/>
            <person name="Mayes R."/>
            <person name="Keating L."/>
            <person name="Wheeler P.R."/>
            <person name="Parkhill J."/>
            <person name="Barrell B.G."/>
            <person name="Cole S.T."/>
            <person name="Gordon S.V."/>
            <person name="Hewinson R.G."/>
        </authorList>
    </citation>
    <scope>NUCLEOTIDE SEQUENCE [LARGE SCALE GENOMIC DNA]</scope>
    <source>
        <strain>ATCC BAA-935 / AF2122/97</strain>
    </source>
</reference>
<reference key="3">
    <citation type="journal article" date="2017" name="Genome Announc.">
        <title>Updated reference genome sequence and annotation of Mycobacterium bovis AF2122/97.</title>
        <authorList>
            <person name="Malone K.M."/>
            <person name="Farrell D."/>
            <person name="Stuber T.P."/>
            <person name="Schubert O.T."/>
            <person name="Aebersold R."/>
            <person name="Robbe-Austerman S."/>
            <person name="Gordon S.V."/>
        </authorList>
    </citation>
    <scope>NUCLEOTIDE SEQUENCE [LARGE SCALE GENOMIC DNA]</scope>
    <scope>GENOME REANNOTATION</scope>
    <source>
        <strain>ATCC BAA-935 / AF2122/97</strain>
    </source>
</reference>
<evidence type="ECO:0000255" key="1">
    <source>
        <dbReference type="HAMAP-Rule" id="MF_02121"/>
    </source>
</evidence>
<evidence type="ECO:0000305" key="2"/>
<organism>
    <name type="scientific">Mycobacterium bovis (strain ATCC BAA-935 / AF2122/97)</name>
    <dbReference type="NCBI Taxonomy" id="233413"/>
    <lineage>
        <taxon>Bacteria</taxon>
        <taxon>Bacillati</taxon>
        <taxon>Actinomycetota</taxon>
        <taxon>Actinomycetes</taxon>
        <taxon>Mycobacteriales</taxon>
        <taxon>Mycobacteriaceae</taxon>
        <taxon>Mycobacterium</taxon>
        <taxon>Mycobacterium tuberculosis complex</taxon>
    </lineage>
</organism>
<sequence>MGLSIGIVGATGQVGQVMRTLLDERDFPASAVRFFASARSQGRKLAFRGQEIEVEDAETADPSGLDIALFSAGSAMSKVQAPRFAAAGVTVIDNSSAWRKDPDVPLVVSEVNFERDAHRRPKGIIANPNCTTMAAMPVLKVLHDEARLVRLVVSSYQAVSGSGLAGVAELAEQARAVIGGAEQLVYDGGALEFPPPNTYVAPIAFNVVPLAGSLVDDGSGETDEDQKLRFESRKILGIPDLLVSGTCVRVPVFTGHSLSINAEFAQPLSPERARELLDGATGVQLVDVPTPLAAAGVDESLVGRIRRDPGVPDGRGLALFVSGDNLRKGAALNTIQIAELLTADL</sequence>
<feature type="chain" id="PRO_0000141381" description="Aspartate-semialdehyde dehydrogenase">
    <location>
        <begin position="1"/>
        <end position="345"/>
    </location>
</feature>
<feature type="active site" description="Acyl-thioester intermediate" evidence="1">
    <location>
        <position position="130"/>
    </location>
</feature>
<feature type="active site" description="Proton acceptor" evidence="1">
    <location>
        <position position="256"/>
    </location>
</feature>
<feature type="binding site" evidence="1">
    <location>
        <begin position="11"/>
        <end position="14"/>
    </location>
    <ligand>
        <name>NADP(+)</name>
        <dbReference type="ChEBI" id="CHEBI:58349"/>
    </ligand>
</feature>
<feature type="binding site" evidence="1">
    <location>
        <begin position="39"/>
        <end position="40"/>
    </location>
    <ligand>
        <name>NADP(+)</name>
        <dbReference type="ChEBI" id="CHEBI:58349"/>
    </ligand>
</feature>
<feature type="binding site" evidence="1">
    <location>
        <position position="99"/>
    </location>
    <ligand>
        <name>phosphate</name>
        <dbReference type="ChEBI" id="CHEBI:43474"/>
    </ligand>
</feature>
<feature type="binding site" evidence="1">
    <location>
        <position position="157"/>
    </location>
    <ligand>
        <name>substrate</name>
    </ligand>
</feature>
<feature type="binding site" evidence="1">
    <location>
        <begin position="160"/>
        <end position="161"/>
    </location>
    <ligand>
        <name>NADP(+)</name>
        <dbReference type="ChEBI" id="CHEBI:58349"/>
    </ligand>
</feature>
<feature type="binding site" evidence="1">
    <location>
        <position position="227"/>
    </location>
    <ligand>
        <name>phosphate</name>
        <dbReference type="ChEBI" id="CHEBI:43474"/>
    </ligand>
</feature>
<feature type="binding site" evidence="1">
    <location>
        <position position="249"/>
    </location>
    <ligand>
        <name>substrate</name>
    </ligand>
</feature>
<feature type="binding site" evidence="1">
    <location>
        <position position="325"/>
    </location>
    <ligand>
        <name>NADP(+)</name>
        <dbReference type="ChEBI" id="CHEBI:58349"/>
    </ligand>
</feature>
<gene>
    <name evidence="1" type="primary">asd</name>
    <name type="ordered locus">BQ2027_MB3735C</name>
</gene>
<comment type="function">
    <text evidence="1">Catalyzes the NADPH-dependent formation of L-aspartate-semialdehyde (L-ASA) by the reductive dephosphorylation of L-aspartyl-4-phosphate.</text>
</comment>
<comment type="catalytic activity">
    <reaction evidence="1">
        <text>L-aspartate 4-semialdehyde + phosphate + NADP(+) = 4-phospho-L-aspartate + NADPH + H(+)</text>
        <dbReference type="Rhea" id="RHEA:24284"/>
        <dbReference type="ChEBI" id="CHEBI:15378"/>
        <dbReference type="ChEBI" id="CHEBI:43474"/>
        <dbReference type="ChEBI" id="CHEBI:57535"/>
        <dbReference type="ChEBI" id="CHEBI:57783"/>
        <dbReference type="ChEBI" id="CHEBI:58349"/>
        <dbReference type="ChEBI" id="CHEBI:537519"/>
        <dbReference type="EC" id="1.2.1.11"/>
    </reaction>
</comment>
<comment type="pathway">
    <text evidence="1">Amino-acid biosynthesis; L-lysine biosynthesis via DAP pathway; (S)-tetrahydrodipicolinate from L-aspartate: step 2/4.</text>
</comment>
<comment type="pathway">
    <text evidence="1">Amino-acid biosynthesis; L-methionine biosynthesis via de novo pathway; L-homoserine from L-aspartate: step 2/3.</text>
</comment>
<comment type="pathway">
    <text evidence="1">Amino-acid biosynthesis; L-threonine biosynthesis; L-threonine from L-aspartate: step 2/5.</text>
</comment>
<comment type="subunit">
    <text evidence="1">Homodimer.</text>
</comment>
<comment type="similarity">
    <text evidence="1">Belongs to the aspartate-semialdehyde dehydrogenase family.</text>
</comment>
<comment type="sequence caution" evidence="2">
    <conflict type="frameshift">
        <sequence resource="EMBL" id="Z18290"/>
    </conflict>
</comment>